<protein>
    <recommendedName>
        <fullName evidence="10">FAD-linked oxidoreductase aurO</fullName>
        <ecNumber evidence="11">1.-.-.-</ecNumber>
    </recommendedName>
    <alternativeName>
        <fullName evidence="10">Aurofusarin biosynthesis cluster protein O</fullName>
    </alternativeName>
    <alternativeName>
        <fullName evidence="9">Gibberella pigment protein 3</fullName>
    </alternativeName>
</protein>
<keyword id="KW-0274">FAD</keyword>
<keyword id="KW-0285">Flavoprotein</keyword>
<keyword id="KW-0560">Oxidoreductase</keyword>
<keyword id="KW-1185">Reference proteome</keyword>
<keyword id="KW-0964">Secreted</keyword>
<gene>
    <name evidence="10" type="primary">aurO</name>
    <name evidence="9" type="synonym">GIP3</name>
    <name type="ORF">FG02321</name>
    <name type="ORF">FGRAMPH1_01T05587</name>
</gene>
<sequence>MINSFSLFAHITPIIRSSLHSRYSVISSRKAMSSLAAAPYRHVMMPFSPAQDAQVHGNSALTKLTDAIPDLKIYTRSSPHYESLRGVYNKLITAQPLAICRPTSVAQVQAIVKTVSGLGIPLGVRGGGHDVFGRGCIADSVTIDMRELDTQELSQDKKTVKVGGGITSKNLVGFLGSHNLCTSNGFAGEAGWTSWASWGGYGPLGDYVGLGVDNIVGAKIVTASGDVVDAKGDSELLWALRGGGGNFGVIAETDVRVYPMSTIQAGFIVYPWPETADVLLRLQALLDSGVPDKLCLQAGFTKGEWGLGMAITYIWPEAETIGPESEEWLQKLKGLGTCIVDTVAETTFEAFQASISSAISNPVNVTSRHISISKFTSDTLNQLIGACESMPAEADCSITCTILHGKAAQANVLSAFGTRRPHIMLHINAVTEEAAHEHVAIAWADRLVDGVEATGDSIGSTYVSFMESDKDPKGCYGENWERLKAVKKEVDPNDVFRFVHGRIPAA</sequence>
<reference key="1">
    <citation type="journal article" date="2007" name="Science">
        <title>The Fusarium graminearum genome reveals a link between localized polymorphism and pathogen specialization.</title>
        <authorList>
            <person name="Cuomo C.A."/>
            <person name="Gueldener U."/>
            <person name="Xu J.-R."/>
            <person name="Trail F."/>
            <person name="Turgeon B.G."/>
            <person name="Di Pietro A."/>
            <person name="Walton J.D."/>
            <person name="Ma L.-J."/>
            <person name="Baker S.E."/>
            <person name="Rep M."/>
            <person name="Adam G."/>
            <person name="Antoniw J."/>
            <person name="Baldwin T."/>
            <person name="Calvo S.E."/>
            <person name="Chang Y.-L."/>
            <person name="DeCaprio D."/>
            <person name="Gale L.R."/>
            <person name="Gnerre S."/>
            <person name="Goswami R.S."/>
            <person name="Hammond-Kosack K."/>
            <person name="Harris L.J."/>
            <person name="Hilburn K."/>
            <person name="Kennell J.C."/>
            <person name="Kroken S."/>
            <person name="Magnuson J.K."/>
            <person name="Mannhaupt G."/>
            <person name="Mauceli E.W."/>
            <person name="Mewes H.-W."/>
            <person name="Mitterbauer R."/>
            <person name="Muehlbauer G."/>
            <person name="Muensterkoetter M."/>
            <person name="Nelson D."/>
            <person name="O'Donnell K."/>
            <person name="Ouellet T."/>
            <person name="Qi W."/>
            <person name="Quesneville H."/>
            <person name="Roncero M.I.G."/>
            <person name="Seong K.-Y."/>
            <person name="Tetko I.V."/>
            <person name="Urban M."/>
            <person name="Waalwijk C."/>
            <person name="Ward T.J."/>
            <person name="Yao J."/>
            <person name="Birren B.W."/>
            <person name="Kistler H.C."/>
        </authorList>
    </citation>
    <scope>NUCLEOTIDE SEQUENCE [LARGE SCALE GENOMIC DNA]</scope>
    <source>
        <strain>ATCC MYA-4620 / CBS 123657 / FGSC 9075 / NRRL 31084 / PH-1</strain>
    </source>
</reference>
<reference key="2">
    <citation type="journal article" date="2010" name="Nature">
        <title>Comparative genomics reveals mobile pathogenicity chromosomes in Fusarium.</title>
        <authorList>
            <person name="Ma L.-J."/>
            <person name="van der Does H.C."/>
            <person name="Borkovich K.A."/>
            <person name="Coleman J.J."/>
            <person name="Daboussi M.-J."/>
            <person name="Di Pietro A."/>
            <person name="Dufresne M."/>
            <person name="Freitag M."/>
            <person name="Grabherr M."/>
            <person name="Henrissat B."/>
            <person name="Houterman P.M."/>
            <person name="Kang S."/>
            <person name="Shim W.-B."/>
            <person name="Woloshuk C."/>
            <person name="Xie X."/>
            <person name="Xu J.-R."/>
            <person name="Antoniw J."/>
            <person name="Baker S.E."/>
            <person name="Bluhm B.H."/>
            <person name="Breakspear A."/>
            <person name="Brown D.W."/>
            <person name="Butchko R.A.E."/>
            <person name="Chapman S."/>
            <person name="Coulson R."/>
            <person name="Coutinho P.M."/>
            <person name="Danchin E.G.J."/>
            <person name="Diener A."/>
            <person name="Gale L.R."/>
            <person name="Gardiner D.M."/>
            <person name="Goff S."/>
            <person name="Hammond-Kosack K.E."/>
            <person name="Hilburn K."/>
            <person name="Hua-Van A."/>
            <person name="Jonkers W."/>
            <person name="Kazan K."/>
            <person name="Kodira C.D."/>
            <person name="Koehrsen M."/>
            <person name="Kumar L."/>
            <person name="Lee Y.-H."/>
            <person name="Li L."/>
            <person name="Manners J.M."/>
            <person name="Miranda-Saavedra D."/>
            <person name="Mukherjee M."/>
            <person name="Park G."/>
            <person name="Park J."/>
            <person name="Park S.-Y."/>
            <person name="Proctor R.H."/>
            <person name="Regev A."/>
            <person name="Ruiz-Roldan M.C."/>
            <person name="Sain D."/>
            <person name="Sakthikumar S."/>
            <person name="Sykes S."/>
            <person name="Schwartz D.C."/>
            <person name="Turgeon B.G."/>
            <person name="Wapinski I."/>
            <person name="Yoder O."/>
            <person name="Young S."/>
            <person name="Zeng Q."/>
            <person name="Zhou S."/>
            <person name="Galagan J."/>
            <person name="Cuomo C.A."/>
            <person name="Kistler H.C."/>
            <person name="Rep M."/>
        </authorList>
    </citation>
    <scope>GENOME REANNOTATION</scope>
    <source>
        <strain>ATCC MYA-4620 / CBS 123657 / FGSC 9075 / NRRL 31084 / PH-1</strain>
    </source>
</reference>
<reference key="3">
    <citation type="journal article" date="2015" name="BMC Genomics">
        <title>The completed genome sequence of the pathogenic ascomycete fungus Fusarium graminearum.</title>
        <authorList>
            <person name="King R."/>
            <person name="Urban M."/>
            <person name="Hammond-Kosack M.C.U."/>
            <person name="Hassani-Pak K."/>
            <person name="Hammond-Kosack K.E."/>
        </authorList>
    </citation>
    <scope>NUCLEOTIDE SEQUENCE [LARGE SCALE GENOMIC DNA]</scope>
    <source>
        <strain>ATCC MYA-4620 / CBS 123657 / FGSC 9075 / NRRL 31084 / PH-1</strain>
    </source>
</reference>
<reference key="4">
    <citation type="journal article" date="2005" name="Appl. Environ. Microbiol.">
        <title>Putative polyketide synthase and laccase genes for biosynthesis of aurofusarin in Gibberella zeae.</title>
        <authorList>
            <person name="Kim J.E."/>
            <person name="Han K.H."/>
            <person name="Jin J."/>
            <person name="Kim H."/>
            <person name="Kim J.C."/>
            <person name="Yun S.H."/>
            <person name="Lee Y.W."/>
        </authorList>
    </citation>
    <scope>FUNCTION</scope>
</reference>
<reference key="5">
    <citation type="journal article" date="2005" name="Fungal Genet. Biol.">
        <title>Identification of a gene cluster responsible for the biosynthesis of aurofusarin in the Fusarium graminearum species complex.</title>
        <authorList>
            <person name="Malz S."/>
            <person name="Grell M.N."/>
            <person name="Thrane C."/>
            <person name="Maier F.J."/>
            <person name="Rosager P."/>
            <person name="Felk A."/>
            <person name="Albertsen K.S."/>
            <person name="Salomon S."/>
            <person name="Bohn L."/>
            <person name="Schaefer W."/>
            <person name="Giese H."/>
        </authorList>
    </citation>
    <scope>FUNCTION</scope>
    <scope>PATHWAY</scope>
</reference>
<reference key="6">
    <citation type="journal article" date="2006" name="Mol. Microbiol.">
        <title>The biosynthetic pathway for aurofusarin in Fusarium graminearum reveals a close link between the naphthoquinones and naphthopyrones.</title>
        <authorList>
            <person name="Frandsen R.J."/>
            <person name="Nielsen N.J."/>
            <person name="Maolanon N."/>
            <person name="Soerensen J.C."/>
            <person name="Olsson S."/>
            <person name="Nielsen J."/>
            <person name="Giese H."/>
        </authorList>
    </citation>
    <scope>FUNCTION</scope>
    <scope>DISRUPTION PHENOTYPE</scope>
    <scope>PATHWAY</scope>
</reference>
<reference key="7">
    <citation type="journal article" date="2006" name="Appl. Environ. Microbiol.">
        <title>GIP2, a putative transcription factor that regulates the aurofusarin biosynthetic gene cluster in Gibberella zeae.</title>
        <authorList>
            <person name="Kim J.E."/>
            <person name="Jin J."/>
            <person name="Kim H."/>
            <person name="Kim J.C."/>
            <person name="Yun S.H."/>
            <person name="Lee Y.W."/>
        </authorList>
    </citation>
    <scope>INDUCTION</scope>
</reference>
<reference key="8">
    <citation type="journal article" date="2011" name="J. Biol. Chem.">
        <title>Two novel classes of enzymes are required for the biosynthesis of aurofusarin in Fusarium graminearum.</title>
        <authorList>
            <person name="Frandsen R.J."/>
            <person name="Schuett C."/>
            <person name="Lund B.W."/>
            <person name="Staerk D."/>
            <person name="Nielsen J."/>
            <person name="Olsson S."/>
            <person name="Giese H."/>
        </authorList>
    </citation>
    <scope>FUNCTION</scope>
    <scope>SUBCELLULAR LOCATION</scope>
    <scope>SUBUNIT</scope>
    <scope>PATHWAY</scope>
</reference>
<reference key="9">
    <citation type="journal article" date="2013" name="Microb. Cell Fact.">
        <title>Reconstruction of the biosynthetic pathway for the core fungal polyketide scaffold rubrofusarin in Saccharomyces cerevisiae.</title>
        <authorList>
            <person name="Rugbjerg P."/>
            <person name="Naesby M."/>
            <person name="Mortensen U.H."/>
            <person name="Frandsen R.J."/>
        </authorList>
    </citation>
    <scope>FUNCTION</scope>
</reference>
<comment type="function">
    <text evidence="3 4 6 7 8">FAD-linked oxidoreductase; part of the gene cluster that mediates the biosynthesis of aurofusarin, a red mycelium pigment which is acting as a mycotoxin (PubMed:15809006, PubMed:15811992, PubMed:16879655). The first step is performed by the polyketide synthase which condenses one acetyl-CoA and 6 malonyl-CoA units to form the first intermediate, the cyclic heptaketide and yellow pigment YWA1 (PubMed:21296881, PubMed:23557488). The C2 hydroxyl group in the pyrone ring of YWA1 is probably formed during ring closure by an aldol-type cyclization reaction (PubMed:21296881). The dehydratase aurZ then acts as the first tailoring enzyme in the aurofusarin biosynthetic pathway by converting YWA1 to nor-rubrofusarin (PubMed:21296881, PubMed:23557488). Nor-rubrofusarin is then methylated to rubrofusarin by the O-methyltransferase aurJ (PubMed:21296881, PubMed:23557488). Rubrofusarin is then transported across the plasma membrane by the rubrofusarin-specific pump aurT for further enzymatic processing by the extracellular complex composed of GIP1, aurF, aurO and aurS to yield aurofusarin (PubMed:21296881).</text>
</comment>
<comment type="cofactor">
    <cofactor evidence="1">
        <name>FAD</name>
        <dbReference type="ChEBI" id="CHEBI:57692"/>
    </cofactor>
</comment>
<comment type="pathway">
    <text evidence="3 6 7">Pigment biosynthesis.</text>
</comment>
<comment type="subunit">
    <text evidence="12">Might be part of an extracellular enzyme complex composed of GIP1, aurF, aurO and aurS (PubMed:21296881).</text>
</comment>
<comment type="subcellular location">
    <subcellularLocation>
        <location evidence="12">Secreted</location>
    </subcellularLocation>
    <subcellularLocation>
        <location evidence="12">Secreted</location>
        <location evidence="12">Extracellular space</location>
    </subcellularLocation>
</comment>
<comment type="induction">
    <text evidence="5">Expression is regulated by the aurofusarin biosynthesis cluster-specific transcription factor aurR1/GIP2 (PubMed:16461721).</text>
</comment>
<comment type="disruption phenotype">
    <text evidence="6">Impairs the production of aurofusarin and leads to the accumulation of a light yellow pigment (PubMed:16879655).</text>
</comment>
<comment type="similarity">
    <text evidence="11">Belongs to the oxygen-dependent FAD-linked oxidoreductase family.</text>
</comment>
<dbReference type="EC" id="1.-.-.-" evidence="11"/>
<dbReference type="EMBL" id="HG970332">
    <property type="protein sequence ID" value="CEF74598.1"/>
    <property type="molecule type" value="Genomic_DNA"/>
</dbReference>
<dbReference type="RefSeq" id="XP_011318230.1">
    <property type="nucleotide sequence ID" value="XM_011319928.1"/>
</dbReference>
<dbReference type="SMR" id="I1RF55"/>
<dbReference type="STRING" id="229533.I1RF55"/>
<dbReference type="KEGG" id="fgr:FGSG_02321"/>
<dbReference type="VEuPathDB" id="FungiDB:FGRAMPH1_01G05587"/>
<dbReference type="eggNOG" id="ENOG502SKWA">
    <property type="taxonomic scope" value="Eukaryota"/>
</dbReference>
<dbReference type="HOGENOM" id="CLU_018354_10_0_1"/>
<dbReference type="InParanoid" id="I1RF55"/>
<dbReference type="OrthoDB" id="90494at110618"/>
<dbReference type="BioCyc" id="MetaCyc:MONOMER-19452"/>
<dbReference type="Proteomes" id="UP000070720">
    <property type="component" value="Chromosome 1"/>
</dbReference>
<dbReference type="GO" id="GO:0005576">
    <property type="term" value="C:extracellular region"/>
    <property type="evidence" value="ECO:0007669"/>
    <property type="project" value="UniProtKB-SubCell"/>
</dbReference>
<dbReference type="GO" id="GO:0071949">
    <property type="term" value="F:FAD binding"/>
    <property type="evidence" value="ECO:0007669"/>
    <property type="project" value="InterPro"/>
</dbReference>
<dbReference type="GO" id="GO:0016491">
    <property type="term" value="F:oxidoreductase activity"/>
    <property type="evidence" value="ECO:0007669"/>
    <property type="project" value="UniProtKB-KW"/>
</dbReference>
<dbReference type="Gene3D" id="3.30.465.10">
    <property type="match status" value="1"/>
</dbReference>
<dbReference type="Gene3D" id="3.40.462.20">
    <property type="match status" value="1"/>
</dbReference>
<dbReference type="Gene3D" id="3.30.43.10">
    <property type="entry name" value="Uridine Diphospho-n-acetylenolpyruvylglucosamine Reductase, domain 2"/>
    <property type="match status" value="1"/>
</dbReference>
<dbReference type="InterPro" id="IPR012951">
    <property type="entry name" value="BBE"/>
</dbReference>
<dbReference type="InterPro" id="IPR016166">
    <property type="entry name" value="FAD-bd_PCMH"/>
</dbReference>
<dbReference type="InterPro" id="IPR036318">
    <property type="entry name" value="FAD-bd_PCMH-like_sf"/>
</dbReference>
<dbReference type="InterPro" id="IPR016167">
    <property type="entry name" value="FAD-bd_PCMH_sub1"/>
</dbReference>
<dbReference type="InterPro" id="IPR016169">
    <property type="entry name" value="FAD-bd_PCMH_sub2"/>
</dbReference>
<dbReference type="InterPro" id="IPR050416">
    <property type="entry name" value="FAD-linked_Oxidoreductase"/>
</dbReference>
<dbReference type="InterPro" id="IPR006094">
    <property type="entry name" value="Oxid_FAD_bind_N"/>
</dbReference>
<dbReference type="PANTHER" id="PTHR42973">
    <property type="entry name" value="BINDING OXIDOREDUCTASE, PUTATIVE (AFU_ORTHOLOGUE AFUA_1G17690)-RELATED"/>
    <property type="match status" value="1"/>
</dbReference>
<dbReference type="PANTHER" id="PTHR42973:SF7">
    <property type="entry name" value="FAD-BINDING PCMH-TYPE DOMAIN-CONTAINING PROTEIN"/>
    <property type="match status" value="1"/>
</dbReference>
<dbReference type="Pfam" id="PF08031">
    <property type="entry name" value="BBE"/>
    <property type="match status" value="1"/>
</dbReference>
<dbReference type="Pfam" id="PF01565">
    <property type="entry name" value="FAD_binding_4"/>
    <property type="match status" value="1"/>
</dbReference>
<dbReference type="SUPFAM" id="SSF56176">
    <property type="entry name" value="FAD-binding/transporter-associated domain-like"/>
    <property type="match status" value="1"/>
</dbReference>
<dbReference type="PROSITE" id="PS51387">
    <property type="entry name" value="FAD_PCMH"/>
    <property type="match status" value="1"/>
</dbReference>
<feature type="chain" id="PRO_0000441091" description="FAD-linked oxidoreductase aurO">
    <location>
        <begin position="1"/>
        <end position="506"/>
    </location>
</feature>
<feature type="domain" description="FAD-binding PCMH-type" evidence="2">
    <location>
        <begin position="92"/>
        <end position="260"/>
    </location>
</feature>
<organism>
    <name type="scientific">Gibberella zeae (strain ATCC MYA-4620 / CBS 123657 / FGSC 9075 / NRRL 31084 / PH-1)</name>
    <name type="common">Wheat head blight fungus</name>
    <name type="synonym">Fusarium graminearum</name>
    <dbReference type="NCBI Taxonomy" id="229533"/>
    <lineage>
        <taxon>Eukaryota</taxon>
        <taxon>Fungi</taxon>
        <taxon>Dikarya</taxon>
        <taxon>Ascomycota</taxon>
        <taxon>Pezizomycotina</taxon>
        <taxon>Sordariomycetes</taxon>
        <taxon>Hypocreomycetidae</taxon>
        <taxon>Hypocreales</taxon>
        <taxon>Nectriaceae</taxon>
        <taxon>Fusarium</taxon>
    </lineage>
</organism>
<evidence type="ECO:0000250" key="1">
    <source>
        <dbReference type="UniProtKB" id="P08159"/>
    </source>
</evidence>
<evidence type="ECO:0000255" key="2">
    <source>
        <dbReference type="PROSITE-ProRule" id="PRU00718"/>
    </source>
</evidence>
<evidence type="ECO:0000269" key="3">
    <source>
    </source>
</evidence>
<evidence type="ECO:0000269" key="4">
    <source>
    </source>
</evidence>
<evidence type="ECO:0000269" key="5">
    <source>
    </source>
</evidence>
<evidence type="ECO:0000269" key="6">
    <source>
    </source>
</evidence>
<evidence type="ECO:0000269" key="7">
    <source>
    </source>
</evidence>
<evidence type="ECO:0000269" key="8">
    <source>
    </source>
</evidence>
<evidence type="ECO:0000303" key="9">
    <source>
    </source>
</evidence>
<evidence type="ECO:0000303" key="10">
    <source>
    </source>
</evidence>
<evidence type="ECO:0000305" key="11"/>
<evidence type="ECO:0000305" key="12">
    <source>
    </source>
</evidence>
<proteinExistence type="evidence at protein level"/>
<name>AURO_GIBZE</name>
<accession>I1RF55</accession>